<gene>
    <name type="ordered locus">LMOf2365_2447</name>
</gene>
<comment type="function">
    <text evidence="1">Displays ATPase and GTPase activities.</text>
</comment>
<comment type="similarity">
    <text evidence="1">Belongs to the RapZ-like family.</text>
</comment>
<organism>
    <name type="scientific">Listeria monocytogenes serotype 4b (strain F2365)</name>
    <dbReference type="NCBI Taxonomy" id="265669"/>
    <lineage>
        <taxon>Bacteria</taxon>
        <taxon>Bacillati</taxon>
        <taxon>Bacillota</taxon>
        <taxon>Bacilli</taxon>
        <taxon>Bacillales</taxon>
        <taxon>Listeriaceae</taxon>
        <taxon>Listeria</taxon>
    </lineage>
</organism>
<name>Y2447_LISMF</name>
<evidence type="ECO:0000255" key="1">
    <source>
        <dbReference type="HAMAP-Rule" id="MF_00636"/>
    </source>
</evidence>
<reference key="1">
    <citation type="journal article" date="2004" name="Nucleic Acids Res.">
        <title>Whole genome comparisons of serotype 4b and 1/2a strains of the food-borne pathogen Listeria monocytogenes reveal new insights into the core genome components of this species.</title>
        <authorList>
            <person name="Nelson K.E."/>
            <person name="Fouts D.E."/>
            <person name="Mongodin E.F."/>
            <person name="Ravel J."/>
            <person name="DeBoy R.T."/>
            <person name="Kolonay J.F."/>
            <person name="Rasko D.A."/>
            <person name="Angiuoli S.V."/>
            <person name="Gill S.R."/>
            <person name="Paulsen I.T."/>
            <person name="Peterson J.D."/>
            <person name="White O."/>
            <person name="Nelson W.C."/>
            <person name="Nierman W.C."/>
            <person name="Beanan M.J."/>
            <person name="Brinkac L.M."/>
            <person name="Daugherty S.C."/>
            <person name="Dodson R.J."/>
            <person name="Durkin A.S."/>
            <person name="Madupu R."/>
            <person name="Haft D.H."/>
            <person name="Selengut J."/>
            <person name="Van Aken S.E."/>
            <person name="Khouri H.M."/>
            <person name="Fedorova N."/>
            <person name="Forberger H.A."/>
            <person name="Tran B."/>
            <person name="Kathariou S."/>
            <person name="Wonderling L.D."/>
            <person name="Uhlich G.A."/>
            <person name="Bayles D.O."/>
            <person name="Luchansky J.B."/>
            <person name="Fraser C.M."/>
        </authorList>
    </citation>
    <scope>NUCLEOTIDE SEQUENCE [LARGE SCALE GENOMIC DNA]</scope>
    <source>
        <strain>F2365</strain>
    </source>
</reference>
<dbReference type="EMBL" id="AE017262">
    <property type="protein sequence ID" value="AAT05212.1"/>
    <property type="molecule type" value="Genomic_DNA"/>
</dbReference>
<dbReference type="SMR" id="Q71WV3"/>
<dbReference type="KEGG" id="lmf:LMOf2365_2447"/>
<dbReference type="HOGENOM" id="CLU_059558_0_0_9"/>
<dbReference type="GO" id="GO:0005524">
    <property type="term" value="F:ATP binding"/>
    <property type="evidence" value="ECO:0007669"/>
    <property type="project" value="UniProtKB-UniRule"/>
</dbReference>
<dbReference type="GO" id="GO:0005525">
    <property type="term" value="F:GTP binding"/>
    <property type="evidence" value="ECO:0007669"/>
    <property type="project" value="UniProtKB-UniRule"/>
</dbReference>
<dbReference type="Gene3D" id="3.40.50.300">
    <property type="entry name" value="P-loop containing nucleotide triphosphate hydrolases"/>
    <property type="match status" value="1"/>
</dbReference>
<dbReference type="HAMAP" id="MF_00636">
    <property type="entry name" value="RapZ_like"/>
    <property type="match status" value="1"/>
</dbReference>
<dbReference type="InterPro" id="IPR027417">
    <property type="entry name" value="P-loop_NTPase"/>
</dbReference>
<dbReference type="InterPro" id="IPR005337">
    <property type="entry name" value="RapZ-like"/>
</dbReference>
<dbReference type="InterPro" id="IPR053930">
    <property type="entry name" value="RapZ-like_N"/>
</dbReference>
<dbReference type="InterPro" id="IPR053931">
    <property type="entry name" value="RapZ_C"/>
</dbReference>
<dbReference type="NCBIfam" id="NF003828">
    <property type="entry name" value="PRK05416.1"/>
    <property type="match status" value="1"/>
</dbReference>
<dbReference type="PANTHER" id="PTHR30448">
    <property type="entry name" value="RNASE ADAPTER PROTEIN RAPZ"/>
    <property type="match status" value="1"/>
</dbReference>
<dbReference type="PANTHER" id="PTHR30448:SF0">
    <property type="entry name" value="RNASE ADAPTER PROTEIN RAPZ"/>
    <property type="match status" value="1"/>
</dbReference>
<dbReference type="Pfam" id="PF22740">
    <property type="entry name" value="PapZ_C"/>
    <property type="match status" value="1"/>
</dbReference>
<dbReference type="Pfam" id="PF03668">
    <property type="entry name" value="RapZ-like_N"/>
    <property type="match status" value="1"/>
</dbReference>
<dbReference type="PIRSF" id="PIRSF005052">
    <property type="entry name" value="P-loopkin"/>
    <property type="match status" value="1"/>
</dbReference>
<dbReference type="SUPFAM" id="SSF52540">
    <property type="entry name" value="P-loop containing nucleoside triphosphate hydrolases"/>
    <property type="match status" value="1"/>
</dbReference>
<sequence length="291" mass="33523">MASKQLKLVIITGMSGAGKTVAMQSLEDLGYFCVDNLPPSLLPKFWELMKESDKMDKIALVMDLRGREFFDSIEPALDELDNTNFITTKILFLEADDKVLVSRYKETRRHHPLEPNGSVLDGINAERELLSDLKGRSQLVINTSNMAPRELRERINNEFQTEDKDIFNVQLMSFGFKYGIPIDADLVFDVRFLPNPHYIDKMRPLTGLDEDVYEYVMKWPETQTFLDKLVDLLMFTLPFYKREGKTQLVIAIGCTGGQHRSVALTEFVGKAIQQKYETTISHRDMKRRKGR</sequence>
<keyword id="KW-0067">ATP-binding</keyword>
<keyword id="KW-0342">GTP-binding</keyword>
<keyword id="KW-0547">Nucleotide-binding</keyword>
<feature type="chain" id="PRO_0000107725" description="Nucleotide-binding protein LMOf2365_2447">
    <location>
        <begin position="1"/>
        <end position="291"/>
    </location>
</feature>
<feature type="binding site" evidence="1">
    <location>
        <begin position="13"/>
        <end position="20"/>
    </location>
    <ligand>
        <name>ATP</name>
        <dbReference type="ChEBI" id="CHEBI:30616"/>
    </ligand>
</feature>
<feature type="binding site" evidence="1">
    <location>
        <begin position="63"/>
        <end position="66"/>
    </location>
    <ligand>
        <name>GTP</name>
        <dbReference type="ChEBI" id="CHEBI:37565"/>
    </ligand>
</feature>
<protein>
    <recommendedName>
        <fullName evidence="1">Nucleotide-binding protein LMOf2365_2447</fullName>
    </recommendedName>
</protein>
<accession>Q71WV3</accession>
<proteinExistence type="inferred from homology"/>